<gene>
    <name evidence="1" type="primary">ureE</name>
    <name type="ordered locus">Bcep18194_A4005</name>
</gene>
<reference key="1">
    <citation type="submission" date="2005-10" db="EMBL/GenBank/DDBJ databases">
        <title>Complete sequence of chromosome 1 of Burkholderia sp. 383.</title>
        <authorList>
            <consortium name="US DOE Joint Genome Institute"/>
            <person name="Copeland A."/>
            <person name="Lucas S."/>
            <person name="Lapidus A."/>
            <person name="Barry K."/>
            <person name="Detter J.C."/>
            <person name="Glavina T."/>
            <person name="Hammon N."/>
            <person name="Israni S."/>
            <person name="Pitluck S."/>
            <person name="Chain P."/>
            <person name="Malfatti S."/>
            <person name="Shin M."/>
            <person name="Vergez L."/>
            <person name="Schmutz J."/>
            <person name="Larimer F."/>
            <person name="Land M."/>
            <person name="Kyrpides N."/>
            <person name="Lykidis A."/>
            <person name="Richardson P."/>
        </authorList>
    </citation>
    <scope>NUCLEOTIDE SEQUENCE [LARGE SCALE GENOMIC DNA]</scope>
    <source>
        <strain>ATCC 17760 / DSM 23089 / LMG 22485 / NCIMB 9086 / R18194 / 383</strain>
    </source>
</reference>
<keyword id="KW-0143">Chaperone</keyword>
<keyword id="KW-0963">Cytoplasm</keyword>
<keyword id="KW-0533">Nickel</keyword>
<keyword id="KW-0996">Nickel insertion</keyword>
<protein>
    <recommendedName>
        <fullName evidence="1">Urease accessory protein UreE</fullName>
    </recommendedName>
</protein>
<name>UREE_BURL3</name>
<proteinExistence type="inferred from homology"/>
<accession>Q39IW4</accession>
<dbReference type="EMBL" id="CP000151">
    <property type="protein sequence ID" value="ABB07602.1"/>
    <property type="molecule type" value="Genomic_DNA"/>
</dbReference>
<dbReference type="RefSeq" id="WP_011351184.1">
    <property type="nucleotide sequence ID" value="NC_007510.1"/>
</dbReference>
<dbReference type="SMR" id="Q39IW4"/>
<dbReference type="GeneID" id="45093904"/>
<dbReference type="KEGG" id="bur:Bcep18194_A4005"/>
<dbReference type="PATRIC" id="fig|482957.22.peg.885"/>
<dbReference type="HOGENOM" id="CLU_093757_0_0_4"/>
<dbReference type="Proteomes" id="UP000002705">
    <property type="component" value="Chromosome 1"/>
</dbReference>
<dbReference type="GO" id="GO:0005737">
    <property type="term" value="C:cytoplasm"/>
    <property type="evidence" value="ECO:0007669"/>
    <property type="project" value="UniProtKB-SubCell"/>
</dbReference>
<dbReference type="GO" id="GO:0016151">
    <property type="term" value="F:nickel cation binding"/>
    <property type="evidence" value="ECO:0007669"/>
    <property type="project" value="UniProtKB-UniRule"/>
</dbReference>
<dbReference type="GO" id="GO:0051082">
    <property type="term" value="F:unfolded protein binding"/>
    <property type="evidence" value="ECO:0007669"/>
    <property type="project" value="UniProtKB-UniRule"/>
</dbReference>
<dbReference type="GO" id="GO:0006457">
    <property type="term" value="P:protein folding"/>
    <property type="evidence" value="ECO:0007669"/>
    <property type="project" value="InterPro"/>
</dbReference>
<dbReference type="GO" id="GO:0065003">
    <property type="term" value="P:protein-containing complex assembly"/>
    <property type="evidence" value="ECO:0007669"/>
    <property type="project" value="InterPro"/>
</dbReference>
<dbReference type="GO" id="GO:0019627">
    <property type="term" value="P:urea metabolic process"/>
    <property type="evidence" value="ECO:0007669"/>
    <property type="project" value="InterPro"/>
</dbReference>
<dbReference type="CDD" id="cd00571">
    <property type="entry name" value="UreE"/>
    <property type="match status" value="1"/>
</dbReference>
<dbReference type="Gene3D" id="2.60.260.20">
    <property type="entry name" value="Urease metallochaperone UreE, N-terminal domain"/>
    <property type="match status" value="1"/>
</dbReference>
<dbReference type="Gene3D" id="3.30.70.790">
    <property type="entry name" value="UreE, C-terminal domain"/>
    <property type="match status" value="1"/>
</dbReference>
<dbReference type="HAMAP" id="MF_00822">
    <property type="entry name" value="UreE"/>
    <property type="match status" value="1"/>
</dbReference>
<dbReference type="InterPro" id="IPR012406">
    <property type="entry name" value="UreE"/>
</dbReference>
<dbReference type="InterPro" id="IPR007864">
    <property type="entry name" value="UreE_C_dom"/>
</dbReference>
<dbReference type="InterPro" id="IPR004029">
    <property type="entry name" value="UreE_N"/>
</dbReference>
<dbReference type="InterPro" id="IPR036118">
    <property type="entry name" value="UreE_N_sf"/>
</dbReference>
<dbReference type="NCBIfam" id="NF009751">
    <property type="entry name" value="PRK13261.1-1"/>
    <property type="match status" value="1"/>
</dbReference>
<dbReference type="NCBIfam" id="NF009762">
    <property type="entry name" value="PRK13263.1"/>
    <property type="match status" value="1"/>
</dbReference>
<dbReference type="Pfam" id="PF05194">
    <property type="entry name" value="UreE_C"/>
    <property type="match status" value="1"/>
</dbReference>
<dbReference type="Pfam" id="PF02814">
    <property type="entry name" value="UreE_N"/>
    <property type="match status" value="1"/>
</dbReference>
<dbReference type="SMART" id="SM00988">
    <property type="entry name" value="UreE_N"/>
    <property type="match status" value="1"/>
</dbReference>
<dbReference type="SUPFAM" id="SSF69737">
    <property type="entry name" value="Urease metallochaperone UreE, C-terminal domain"/>
    <property type="match status" value="1"/>
</dbReference>
<dbReference type="SUPFAM" id="SSF69287">
    <property type="entry name" value="Urease metallochaperone UreE, N-terminal domain"/>
    <property type="match status" value="1"/>
</dbReference>
<feature type="chain" id="PRO_1000083883" description="Urease accessory protein UreE">
    <location>
        <begin position="1"/>
        <end position="207"/>
    </location>
</feature>
<feature type="region of interest" description="Disordered" evidence="2">
    <location>
        <begin position="171"/>
        <end position="207"/>
    </location>
</feature>
<feature type="compositionally biased region" description="Basic and acidic residues" evidence="2">
    <location>
        <begin position="180"/>
        <end position="194"/>
    </location>
</feature>
<evidence type="ECO:0000255" key="1">
    <source>
        <dbReference type="HAMAP-Rule" id="MF_00822"/>
    </source>
</evidence>
<evidence type="ECO:0000256" key="2">
    <source>
        <dbReference type="SAM" id="MobiDB-lite"/>
    </source>
</evidence>
<organism>
    <name type="scientific">Burkholderia lata (strain ATCC 17760 / DSM 23089 / LMG 22485 / NCIMB 9086 / R18194 / 383)</name>
    <dbReference type="NCBI Taxonomy" id="482957"/>
    <lineage>
        <taxon>Bacteria</taxon>
        <taxon>Pseudomonadati</taxon>
        <taxon>Pseudomonadota</taxon>
        <taxon>Betaproteobacteria</taxon>
        <taxon>Burkholderiales</taxon>
        <taxon>Burkholderiaceae</taxon>
        <taxon>Burkholderia</taxon>
        <taxon>Burkholderia cepacia complex</taxon>
    </lineage>
</organism>
<sequence>MRTLDKRIAPNVKLAASLVARAPTLTLAYDARCKSRLAATLDTGEDVAVLLPRGTILRDGDVLVADDGALVRIAAAPETVLRVRAADPLTLMRAAYHLGNRHTPVEIGDGYLKLEADPVLADMLRRLGTQVEETLAPFQPEAGAYGGGHKHGHDATFAEDYALAQQVFGEHHGHAHSHSHSHDHDHDHDHDHQHGPGCAHGHGHDHH</sequence>
<comment type="function">
    <text evidence="1">Involved in urease metallocenter assembly. Binds nickel. Probably functions as a nickel donor during metallocenter assembly.</text>
</comment>
<comment type="subcellular location">
    <subcellularLocation>
        <location evidence="1">Cytoplasm</location>
    </subcellularLocation>
</comment>
<comment type="similarity">
    <text evidence="1">Belongs to the UreE family.</text>
</comment>